<organism>
    <name type="scientific">Mycoplasmopsis synoviae (strain 53)</name>
    <name type="common">Mycoplasma synoviae</name>
    <dbReference type="NCBI Taxonomy" id="262723"/>
    <lineage>
        <taxon>Bacteria</taxon>
        <taxon>Bacillati</taxon>
        <taxon>Mycoplasmatota</taxon>
        <taxon>Mycoplasmoidales</taxon>
        <taxon>Metamycoplasmataceae</taxon>
        <taxon>Mycoplasmopsis</taxon>
    </lineage>
</organism>
<sequence length="316" mass="36186">MQITRPHNFETFIGQKNLISTLKAMIESSKKQNKVLNHILFYGMPGMGKTSLAGIIANETKNKIHFIQGSNLEKKSDLINILSVINENDIVFIDEIHSINKNIIEFLYSAMEDFVFDLIIGTESNAKALRMKIKPFTLIGATTKINEMAQPFKDRFGYIARFVSYNAEDMKQIIRNSIKLLNINLGEEHFDFVASYSRNTPRIVNHLLERINDFAIVKNAGIIDKKIIKKTFKSLDLYEYGLTKDHVEYLQLLRDGFDSKPVSLDTLSGVLIHPKEVLVNEIEPILLYLKLITKTSKGRMISSKGITYLLKEKLIW</sequence>
<protein>
    <recommendedName>
        <fullName evidence="1">Holliday junction branch migration complex subunit RuvB</fullName>
        <ecNumber evidence="1">3.6.4.-</ecNumber>
    </recommendedName>
</protein>
<gene>
    <name evidence="1" type="primary">ruvB</name>
    <name type="ordered locus">MS53_0165</name>
</gene>
<dbReference type="EC" id="3.6.4.-" evidence="1"/>
<dbReference type="EMBL" id="AE017245">
    <property type="protein sequence ID" value="AAZ43585.2"/>
    <property type="molecule type" value="Genomic_DNA"/>
</dbReference>
<dbReference type="RefSeq" id="WP_041351862.1">
    <property type="nucleotide sequence ID" value="NC_007294.1"/>
</dbReference>
<dbReference type="SMR" id="Q4A6N6"/>
<dbReference type="STRING" id="262723.MS53_0165"/>
<dbReference type="KEGG" id="msy:MS53_0165"/>
<dbReference type="eggNOG" id="COG2255">
    <property type="taxonomic scope" value="Bacteria"/>
</dbReference>
<dbReference type="HOGENOM" id="CLU_055599_1_0_14"/>
<dbReference type="OrthoDB" id="9804478at2"/>
<dbReference type="Proteomes" id="UP000000549">
    <property type="component" value="Chromosome"/>
</dbReference>
<dbReference type="GO" id="GO:0005737">
    <property type="term" value="C:cytoplasm"/>
    <property type="evidence" value="ECO:0007669"/>
    <property type="project" value="UniProtKB-SubCell"/>
</dbReference>
<dbReference type="GO" id="GO:0048476">
    <property type="term" value="C:Holliday junction resolvase complex"/>
    <property type="evidence" value="ECO:0007669"/>
    <property type="project" value="UniProtKB-UniRule"/>
</dbReference>
<dbReference type="GO" id="GO:0005524">
    <property type="term" value="F:ATP binding"/>
    <property type="evidence" value="ECO:0007669"/>
    <property type="project" value="UniProtKB-UniRule"/>
</dbReference>
<dbReference type="GO" id="GO:0016887">
    <property type="term" value="F:ATP hydrolysis activity"/>
    <property type="evidence" value="ECO:0007669"/>
    <property type="project" value="InterPro"/>
</dbReference>
<dbReference type="GO" id="GO:0000400">
    <property type="term" value="F:four-way junction DNA binding"/>
    <property type="evidence" value="ECO:0007669"/>
    <property type="project" value="UniProtKB-UniRule"/>
</dbReference>
<dbReference type="GO" id="GO:0009378">
    <property type="term" value="F:four-way junction helicase activity"/>
    <property type="evidence" value="ECO:0007669"/>
    <property type="project" value="InterPro"/>
</dbReference>
<dbReference type="GO" id="GO:0006310">
    <property type="term" value="P:DNA recombination"/>
    <property type="evidence" value="ECO:0007669"/>
    <property type="project" value="UniProtKB-UniRule"/>
</dbReference>
<dbReference type="GO" id="GO:0006281">
    <property type="term" value="P:DNA repair"/>
    <property type="evidence" value="ECO:0007669"/>
    <property type="project" value="UniProtKB-UniRule"/>
</dbReference>
<dbReference type="CDD" id="cd00009">
    <property type="entry name" value="AAA"/>
    <property type="match status" value="1"/>
</dbReference>
<dbReference type="Gene3D" id="1.10.8.60">
    <property type="match status" value="1"/>
</dbReference>
<dbReference type="Gene3D" id="3.40.50.300">
    <property type="entry name" value="P-loop containing nucleotide triphosphate hydrolases"/>
    <property type="match status" value="1"/>
</dbReference>
<dbReference type="Gene3D" id="1.10.10.10">
    <property type="entry name" value="Winged helix-like DNA-binding domain superfamily/Winged helix DNA-binding domain"/>
    <property type="match status" value="1"/>
</dbReference>
<dbReference type="HAMAP" id="MF_00016">
    <property type="entry name" value="DNA_HJ_migration_RuvB"/>
    <property type="match status" value="1"/>
</dbReference>
<dbReference type="InterPro" id="IPR003593">
    <property type="entry name" value="AAA+_ATPase"/>
</dbReference>
<dbReference type="InterPro" id="IPR041445">
    <property type="entry name" value="AAA_lid_4"/>
</dbReference>
<dbReference type="InterPro" id="IPR004605">
    <property type="entry name" value="DNA_helicase_Holl-junc_RuvB"/>
</dbReference>
<dbReference type="InterPro" id="IPR027417">
    <property type="entry name" value="P-loop_NTPase"/>
</dbReference>
<dbReference type="InterPro" id="IPR008824">
    <property type="entry name" value="RuvB-like_N"/>
</dbReference>
<dbReference type="InterPro" id="IPR008823">
    <property type="entry name" value="RuvB_C"/>
</dbReference>
<dbReference type="InterPro" id="IPR036388">
    <property type="entry name" value="WH-like_DNA-bd_sf"/>
</dbReference>
<dbReference type="InterPro" id="IPR036390">
    <property type="entry name" value="WH_DNA-bd_sf"/>
</dbReference>
<dbReference type="NCBIfam" id="NF000868">
    <property type="entry name" value="PRK00080.1"/>
    <property type="match status" value="1"/>
</dbReference>
<dbReference type="NCBIfam" id="TIGR00635">
    <property type="entry name" value="ruvB"/>
    <property type="match status" value="1"/>
</dbReference>
<dbReference type="PANTHER" id="PTHR42848">
    <property type="match status" value="1"/>
</dbReference>
<dbReference type="PANTHER" id="PTHR42848:SF1">
    <property type="entry name" value="HOLLIDAY JUNCTION BRANCH MIGRATION COMPLEX SUBUNIT RUVB"/>
    <property type="match status" value="1"/>
</dbReference>
<dbReference type="Pfam" id="PF17864">
    <property type="entry name" value="AAA_lid_4"/>
    <property type="match status" value="1"/>
</dbReference>
<dbReference type="Pfam" id="PF05491">
    <property type="entry name" value="RuvB_C"/>
    <property type="match status" value="1"/>
</dbReference>
<dbReference type="Pfam" id="PF05496">
    <property type="entry name" value="RuvB_N"/>
    <property type="match status" value="1"/>
</dbReference>
<dbReference type="SMART" id="SM00382">
    <property type="entry name" value="AAA"/>
    <property type="match status" value="1"/>
</dbReference>
<dbReference type="SUPFAM" id="SSF52540">
    <property type="entry name" value="P-loop containing nucleoside triphosphate hydrolases"/>
    <property type="match status" value="1"/>
</dbReference>
<dbReference type="SUPFAM" id="SSF46785">
    <property type="entry name" value="Winged helix' DNA-binding domain"/>
    <property type="match status" value="1"/>
</dbReference>
<comment type="function">
    <text evidence="1">The RuvA-RuvB-RuvC complex processes Holliday junction (HJ) DNA during genetic recombination and DNA repair, while the RuvA-RuvB complex plays an important role in the rescue of blocked DNA replication forks via replication fork reversal (RFR). RuvA specifically binds to HJ cruciform DNA, conferring on it an open structure. The RuvB hexamer acts as an ATP-dependent pump, pulling dsDNA into and through the RuvAB complex. RuvB forms 2 homohexamers on either side of HJ DNA bound by 1 or 2 RuvA tetramers; 4 subunits per hexamer contact DNA at a time. Coordinated motions by a converter formed by DNA-disengaged RuvB subunits stimulates ATP hydrolysis and nucleotide exchange. Immobilization of the converter enables RuvB to convert the ATP-contained energy into a lever motion, pulling 2 nucleotides of DNA out of the RuvA tetramer per ATP hydrolyzed, thus driving DNA branch migration. The RuvB motors rotate together with the DNA substrate, which together with the progressing nucleotide cycle form the mechanistic basis for DNA recombination by continuous HJ branch migration. Branch migration allows RuvC to scan DNA until it finds its consensus sequence, where it cleaves and resolves cruciform DNA.</text>
</comment>
<comment type="catalytic activity">
    <reaction evidence="1">
        <text>ATP + H2O = ADP + phosphate + H(+)</text>
        <dbReference type="Rhea" id="RHEA:13065"/>
        <dbReference type="ChEBI" id="CHEBI:15377"/>
        <dbReference type="ChEBI" id="CHEBI:15378"/>
        <dbReference type="ChEBI" id="CHEBI:30616"/>
        <dbReference type="ChEBI" id="CHEBI:43474"/>
        <dbReference type="ChEBI" id="CHEBI:456216"/>
    </reaction>
</comment>
<comment type="subunit">
    <text evidence="1">Homohexamer. Forms an RuvA(8)-RuvB(12)-Holliday junction (HJ) complex. HJ DNA is sandwiched between 2 RuvA tetramers; dsDNA enters through RuvA and exits via RuvB. An RuvB hexamer assembles on each DNA strand where it exits the tetramer. Each RuvB hexamer is contacted by two RuvA subunits (via domain III) on 2 adjacent RuvB subunits; this complex drives branch migration. In the full resolvosome a probable DNA-RuvA(4)-RuvB(12)-RuvC(2) complex forms which resolves the HJ.</text>
</comment>
<comment type="subcellular location">
    <subcellularLocation>
        <location evidence="1">Cytoplasm</location>
    </subcellularLocation>
</comment>
<comment type="domain">
    <text evidence="1">Has 3 domains, the large (RuvB-L) and small ATPase (RuvB-S) domains and the C-terminal head (RuvB-H) domain. The head domain binds DNA, while the ATPase domains jointly bind ATP, ADP or are empty depending on the state of the subunit in the translocation cycle. During a single DNA translocation step the structure of each domain remains the same, but their relative positions change.</text>
</comment>
<comment type="similarity">
    <text evidence="1">Belongs to the RuvB family.</text>
</comment>
<reference key="1">
    <citation type="journal article" date="2005" name="J. Bacteriol.">
        <title>Swine and poultry pathogens: the complete genome sequences of two strains of Mycoplasma hyopneumoniae and a strain of Mycoplasma synoviae.</title>
        <authorList>
            <person name="Vasconcelos A.T.R."/>
            <person name="Ferreira H.B."/>
            <person name="Bizarro C.V."/>
            <person name="Bonatto S.L."/>
            <person name="Carvalho M.O."/>
            <person name="Pinto P.M."/>
            <person name="Almeida D.F."/>
            <person name="Almeida L.G.P."/>
            <person name="Almeida R."/>
            <person name="Alves-Junior L."/>
            <person name="Assuncao E.N."/>
            <person name="Azevedo V.A.C."/>
            <person name="Bogo M.R."/>
            <person name="Brigido M.M."/>
            <person name="Brocchi M."/>
            <person name="Burity H.A."/>
            <person name="Camargo A.A."/>
            <person name="Camargo S.S."/>
            <person name="Carepo M.S."/>
            <person name="Carraro D.M."/>
            <person name="de Mattos Cascardo J.C."/>
            <person name="Castro L.A."/>
            <person name="Cavalcanti G."/>
            <person name="Chemale G."/>
            <person name="Collevatti R.G."/>
            <person name="Cunha C.W."/>
            <person name="Dallagiovanna B."/>
            <person name="Dambros B.P."/>
            <person name="Dellagostin O.A."/>
            <person name="Falcao C."/>
            <person name="Fantinatti-Garboggini F."/>
            <person name="Felipe M.S.S."/>
            <person name="Fiorentin L."/>
            <person name="Franco G.R."/>
            <person name="Freitas N.S.A."/>
            <person name="Frias D."/>
            <person name="Grangeiro T.B."/>
            <person name="Grisard E.C."/>
            <person name="Guimaraes C.T."/>
            <person name="Hungria M."/>
            <person name="Jardim S.N."/>
            <person name="Krieger M.A."/>
            <person name="Laurino J.P."/>
            <person name="Lima L.F.A."/>
            <person name="Lopes M.I."/>
            <person name="Loreto E.L.S."/>
            <person name="Madeira H.M.F."/>
            <person name="Manfio G.P."/>
            <person name="Maranhao A.Q."/>
            <person name="Martinkovics C.T."/>
            <person name="Medeiros S.R.B."/>
            <person name="Moreira M.A.M."/>
            <person name="Neiva M."/>
            <person name="Ramalho-Neto C.E."/>
            <person name="Nicolas M.F."/>
            <person name="Oliveira S.C."/>
            <person name="Paixao R.F.C."/>
            <person name="Pedrosa F.O."/>
            <person name="Pena S.D.J."/>
            <person name="Pereira M."/>
            <person name="Pereira-Ferrari L."/>
            <person name="Piffer I."/>
            <person name="Pinto L.S."/>
            <person name="Potrich D.P."/>
            <person name="Salim A.C.M."/>
            <person name="Santos F.R."/>
            <person name="Schmitt R."/>
            <person name="Schneider M.P.C."/>
            <person name="Schrank A."/>
            <person name="Schrank I.S."/>
            <person name="Schuck A.F."/>
            <person name="Seuanez H.N."/>
            <person name="Silva D.W."/>
            <person name="Silva R."/>
            <person name="Silva S.C."/>
            <person name="Soares C.M.A."/>
            <person name="Souza K.R.L."/>
            <person name="Souza R.C."/>
            <person name="Staats C.C."/>
            <person name="Steffens M.B.R."/>
            <person name="Teixeira S.M.R."/>
            <person name="Urmenyi T.P."/>
            <person name="Vainstein M.H."/>
            <person name="Zuccherato L.W."/>
            <person name="Simpson A.J.G."/>
            <person name="Zaha A."/>
        </authorList>
    </citation>
    <scope>NUCLEOTIDE SEQUENCE [LARGE SCALE GENOMIC DNA]</scope>
    <source>
        <strain>53</strain>
    </source>
</reference>
<proteinExistence type="inferred from homology"/>
<name>RUVB_MYCS5</name>
<evidence type="ECO:0000255" key="1">
    <source>
        <dbReference type="HAMAP-Rule" id="MF_00016"/>
    </source>
</evidence>
<keyword id="KW-0067">ATP-binding</keyword>
<keyword id="KW-0963">Cytoplasm</keyword>
<keyword id="KW-0227">DNA damage</keyword>
<keyword id="KW-0233">DNA recombination</keyword>
<keyword id="KW-0234">DNA repair</keyword>
<keyword id="KW-0238">DNA-binding</keyword>
<keyword id="KW-0378">Hydrolase</keyword>
<keyword id="KW-0547">Nucleotide-binding</keyword>
<keyword id="KW-1185">Reference proteome</keyword>
<accession>Q4A6N6</accession>
<feature type="chain" id="PRO_0000322821" description="Holliday junction branch migration complex subunit RuvB">
    <location>
        <begin position="1"/>
        <end position="316"/>
    </location>
</feature>
<feature type="region of interest" description="Large ATPase domain (RuvB-L)" evidence="1">
    <location>
        <begin position="1"/>
        <end position="165"/>
    </location>
</feature>
<feature type="region of interest" description="Small ATPAse domain (RuvB-S)" evidence="1">
    <location>
        <begin position="166"/>
        <end position="236"/>
    </location>
</feature>
<feature type="region of interest" description="Head domain (RuvB-H)" evidence="1">
    <location>
        <begin position="239"/>
        <end position="316"/>
    </location>
</feature>
<feature type="binding site" evidence="1">
    <location>
        <position position="5"/>
    </location>
    <ligand>
        <name>ATP</name>
        <dbReference type="ChEBI" id="CHEBI:30616"/>
    </ligand>
</feature>
<feature type="binding site" evidence="1">
    <location>
        <position position="46"/>
    </location>
    <ligand>
        <name>ATP</name>
        <dbReference type="ChEBI" id="CHEBI:30616"/>
    </ligand>
</feature>
<feature type="binding site" evidence="1">
    <location>
        <position position="49"/>
    </location>
    <ligand>
        <name>ATP</name>
        <dbReference type="ChEBI" id="CHEBI:30616"/>
    </ligand>
</feature>
<feature type="binding site" evidence="1">
    <location>
        <position position="50"/>
    </location>
    <ligand>
        <name>ATP</name>
        <dbReference type="ChEBI" id="CHEBI:30616"/>
    </ligand>
</feature>
<feature type="binding site" evidence="1">
    <location>
        <position position="50"/>
    </location>
    <ligand>
        <name>Mg(2+)</name>
        <dbReference type="ChEBI" id="CHEBI:18420"/>
    </ligand>
</feature>
<feature type="binding site" evidence="1">
    <location>
        <position position="51"/>
    </location>
    <ligand>
        <name>ATP</name>
        <dbReference type="ChEBI" id="CHEBI:30616"/>
    </ligand>
</feature>
<feature type="binding site" evidence="1">
    <location>
        <begin position="112"/>
        <end position="114"/>
    </location>
    <ligand>
        <name>ATP</name>
        <dbReference type="ChEBI" id="CHEBI:30616"/>
    </ligand>
</feature>
<feature type="binding site" evidence="1">
    <location>
        <position position="155"/>
    </location>
    <ligand>
        <name>ATP</name>
        <dbReference type="ChEBI" id="CHEBI:30616"/>
    </ligand>
</feature>
<feature type="binding site" evidence="1">
    <location>
        <position position="165"/>
    </location>
    <ligand>
        <name>ATP</name>
        <dbReference type="ChEBI" id="CHEBI:30616"/>
    </ligand>
</feature>
<feature type="binding site" evidence="1">
    <location>
        <position position="202"/>
    </location>
    <ligand>
        <name>ATP</name>
        <dbReference type="ChEBI" id="CHEBI:30616"/>
    </ligand>
</feature>
<feature type="binding site" evidence="1">
    <location>
        <position position="294"/>
    </location>
    <ligand>
        <name>DNA</name>
        <dbReference type="ChEBI" id="CHEBI:16991"/>
    </ligand>
</feature>
<feature type="binding site" evidence="1">
    <location>
        <position position="299"/>
    </location>
    <ligand>
        <name>DNA</name>
        <dbReference type="ChEBI" id="CHEBI:16991"/>
    </ligand>
</feature>